<accession>Q9HKV6</accession>
<protein>
    <recommendedName>
        <fullName evidence="1">Protein Ta0487</fullName>
    </recommendedName>
</protein>
<evidence type="ECO:0000255" key="1">
    <source>
        <dbReference type="HAMAP-Rule" id="MF_00226"/>
    </source>
</evidence>
<evidence type="ECO:0007829" key="2">
    <source>
        <dbReference type="PDB" id="3KBQ"/>
    </source>
</evidence>
<gene>
    <name type="ordered locus">Ta0487</name>
</gene>
<dbReference type="EMBL" id="AL445064">
    <property type="protein sequence ID" value="CAC11629.1"/>
    <property type="molecule type" value="Genomic_DNA"/>
</dbReference>
<dbReference type="RefSeq" id="WP_010900914.1">
    <property type="nucleotide sequence ID" value="NC_002578.1"/>
</dbReference>
<dbReference type="PDB" id="3KBQ">
    <property type="method" value="X-ray"/>
    <property type="resolution" value="2.00 A"/>
    <property type="chains" value="A/B=2-170"/>
</dbReference>
<dbReference type="PDBsum" id="3KBQ"/>
<dbReference type="SMR" id="Q9HKV6"/>
<dbReference type="FunCoup" id="Q9HKV6">
    <property type="interactions" value="7"/>
</dbReference>
<dbReference type="STRING" id="273075.gene:9571707"/>
<dbReference type="PaxDb" id="273075-Ta0487"/>
<dbReference type="DNASU" id="1456092"/>
<dbReference type="EnsemblBacteria" id="CAC11629">
    <property type="protein sequence ID" value="CAC11629"/>
    <property type="gene ID" value="CAC11629"/>
</dbReference>
<dbReference type="KEGG" id="tac:Ta0487"/>
<dbReference type="eggNOG" id="arCOG00215">
    <property type="taxonomic scope" value="Archaea"/>
</dbReference>
<dbReference type="HOGENOM" id="CLU_030805_0_5_2"/>
<dbReference type="InParanoid" id="Q9HKV6"/>
<dbReference type="OrthoDB" id="372037at2157"/>
<dbReference type="EvolutionaryTrace" id="Q9HKV6"/>
<dbReference type="Proteomes" id="UP000001024">
    <property type="component" value="Chromosome"/>
</dbReference>
<dbReference type="CDD" id="cd00885">
    <property type="entry name" value="cinA"/>
    <property type="match status" value="1"/>
</dbReference>
<dbReference type="Gene3D" id="3.40.980.10">
    <property type="entry name" value="MoaB/Mog-like domain"/>
    <property type="match status" value="1"/>
</dbReference>
<dbReference type="HAMAP" id="MF_00226_A">
    <property type="entry name" value="CinA_A"/>
    <property type="match status" value="1"/>
</dbReference>
<dbReference type="InterPro" id="IPR050101">
    <property type="entry name" value="CinA"/>
</dbReference>
<dbReference type="InterPro" id="IPR023055">
    <property type="entry name" value="CinA_Arc"/>
</dbReference>
<dbReference type="InterPro" id="IPR036425">
    <property type="entry name" value="MoaB/Mog-like_dom_sf"/>
</dbReference>
<dbReference type="InterPro" id="IPR001453">
    <property type="entry name" value="MoaB/Mog_dom"/>
</dbReference>
<dbReference type="NCBIfam" id="NF002291">
    <property type="entry name" value="PRK01215.1"/>
    <property type="match status" value="1"/>
</dbReference>
<dbReference type="PANTHER" id="PTHR13939">
    <property type="entry name" value="NICOTINAMIDE-NUCLEOTIDE AMIDOHYDROLASE PNCC"/>
    <property type="match status" value="1"/>
</dbReference>
<dbReference type="PANTHER" id="PTHR13939:SF0">
    <property type="entry name" value="NMN AMIDOHYDROLASE-LIKE PROTEIN YFAY"/>
    <property type="match status" value="1"/>
</dbReference>
<dbReference type="Pfam" id="PF00994">
    <property type="entry name" value="MoCF_biosynth"/>
    <property type="match status" value="1"/>
</dbReference>
<dbReference type="SMART" id="SM00852">
    <property type="entry name" value="MoCF_biosynth"/>
    <property type="match status" value="1"/>
</dbReference>
<dbReference type="SUPFAM" id="SSF53218">
    <property type="entry name" value="Molybdenum cofactor biosynthesis proteins"/>
    <property type="match status" value="1"/>
</dbReference>
<proteinExistence type="evidence at protein level"/>
<name>Y487_THEAC</name>
<reference key="1">
    <citation type="journal article" date="2000" name="Nature">
        <title>The genome sequence of the thermoacidophilic scavenger Thermoplasma acidophilum.</title>
        <authorList>
            <person name="Ruepp A."/>
            <person name="Graml W."/>
            <person name="Santos-Martinez M.-L."/>
            <person name="Koretke K.K."/>
            <person name="Volker C."/>
            <person name="Mewes H.-W."/>
            <person name="Frishman D."/>
            <person name="Stocker S."/>
            <person name="Lupas A.N."/>
            <person name="Baumeister W."/>
        </authorList>
    </citation>
    <scope>NUCLEOTIDE SEQUENCE [LARGE SCALE GENOMIC DNA]</scope>
    <source>
        <strain>ATCC 25905 / DSM 1728 / JCM 9062 / NBRC 15155 / AMRC-C165</strain>
    </source>
</reference>
<feature type="chain" id="PRO_0000156803" description="Protein Ta0487">
    <location>
        <begin position="1"/>
        <end position="256"/>
    </location>
</feature>
<feature type="strand" evidence="2">
    <location>
        <begin position="3"/>
        <end position="9"/>
    </location>
</feature>
<feature type="helix" evidence="2">
    <location>
        <begin position="11"/>
        <end position="14"/>
    </location>
</feature>
<feature type="helix" evidence="2">
    <location>
        <begin position="21"/>
        <end position="32"/>
    </location>
</feature>
<feature type="strand" evidence="2">
    <location>
        <begin position="36"/>
        <end position="43"/>
    </location>
</feature>
<feature type="helix" evidence="2">
    <location>
        <begin position="47"/>
        <end position="60"/>
    </location>
</feature>
<feature type="strand" evidence="2">
    <location>
        <begin position="62"/>
        <end position="68"/>
    </location>
</feature>
<feature type="strand" evidence="2">
    <location>
        <begin position="71"/>
        <end position="73"/>
    </location>
</feature>
<feature type="helix" evidence="2">
    <location>
        <begin position="78"/>
        <end position="86"/>
    </location>
</feature>
<feature type="helix" evidence="2">
    <location>
        <begin position="94"/>
        <end position="104"/>
    </location>
</feature>
<feature type="helix" evidence="2">
    <location>
        <begin position="111"/>
        <end position="114"/>
    </location>
</feature>
<feature type="helix" evidence="2">
    <location>
        <begin position="115"/>
        <end position="117"/>
    </location>
</feature>
<feature type="strand" evidence="2">
    <location>
        <begin position="123"/>
        <end position="126"/>
    </location>
</feature>
<feature type="strand" evidence="2">
    <location>
        <begin position="129"/>
        <end position="133"/>
    </location>
</feature>
<feature type="strand" evidence="2">
    <location>
        <begin position="135"/>
        <end position="140"/>
    </location>
</feature>
<feature type="strand" evidence="2">
    <location>
        <begin position="143"/>
        <end position="148"/>
    </location>
</feature>
<feature type="helix" evidence="2">
    <location>
        <begin position="152"/>
        <end position="161"/>
    </location>
</feature>
<feature type="helix" evidence="2">
    <location>
        <begin position="163"/>
        <end position="166"/>
    </location>
</feature>
<comment type="similarity">
    <text evidence="1">Belongs to the CinA family.</text>
</comment>
<keyword id="KW-0002">3D-structure</keyword>
<keyword id="KW-1185">Reference proteome</keyword>
<sequence>MKNASVITVGNEILKGRTVNTNAAFIGNFLTYHGYQVRRGFVVMDDLDEIGWAFRVALEVSDLVVSSGGLGPTFDDMTVEGFAKCIGQDLRIDEDALAMIKKKYGQADLTPQRLKMAKIPPSCRPIENPVGTAPGLICAVGGKKVIILPGVPKEMEALLKAMEKDIIIPDTHYYDDSVIIADVMESAFAPYVDRIMKEFDGIYVKSHPRNVEVKNPELEIEISGFGEDEAALRKKIEDAIARAGEYAVKLGGSVKR</sequence>
<organism>
    <name type="scientific">Thermoplasma acidophilum (strain ATCC 25905 / DSM 1728 / JCM 9062 / NBRC 15155 / AMRC-C165)</name>
    <dbReference type="NCBI Taxonomy" id="273075"/>
    <lineage>
        <taxon>Archaea</taxon>
        <taxon>Methanobacteriati</taxon>
        <taxon>Thermoplasmatota</taxon>
        <taxon>Thermoplasmata</taxon>
        <taxon>Thermoplasmatales</taxon>
        <taxon>Thermoplasmataceae</taxon>
        <taxon>Thermoplasma</taxon>
    </lineage>
</organism>